<name>Y507_SERP5</name>
<proteinExistence type="inferred from homology"/>
<feature type="chain" id="PRO_0000328915" description="UPF0213 protein Spro_0507">
    <location>
        <begin position="1"/>
        <end position="102"/>
    </location>
</feature>
<feature type="domain" description="GIY-YIG" evidence="1">
    <location>
        <begin position="6"/>
        <end position="81"/>
    </location>
</feature>
<sequence>MTEILPTWHLYMLRMPSGMLYTGITTDVTRRLAQHQAGKGAKALRGKGQLVLAFHCQAGDRSKALRLEYRVKQLSKTQKERLVSHPPLSLDYLLPDVAVKAG</sequence>
<gene>
    <name type="ordered locus">Spro_0507</name>
</gene>
<organism>
    <name type="scientific">Serratia proteamaculans (strain 568)</name>
    <dbReference type="NCBI Taxonomy" id="399741"/>
    <lineage>
        <taxon>Bacteria</taxon>
        <taxon>Pseudomonadati</taxon>
        <taxon>Pseudomonadota</taxon>
        <taxon>Gammaproteobacteria</taxon>
        <taxon>Enterobacterales</taxon>
        <taxon>Yersiniaceae</taxon>
        <taxon>Serratia</taxon>
    </lineage>
</organism>
<comment type="similarity">
    <text evidence="1">Belongs to the UPF0213 family.</text>
</comment>
<comment type="sequence caution" evidence="2">
    <conflict type="erroneous initiation">
        <sequence resource="EMBL-CDS" id="ABV39615"/>
    </conflict>
</comment>
<protein>
    <recommendedName>
        <fullName evidence="1">UPF0213 protein Spro_0507</fullName>
    </recommendedName>
</protein>
<reference key="1">
    <citation type="submission" date="2007-09" db="EMBL/GenBank/DDBJ databases">
        <title>Complete sequence of chromosome of Serratia proteamaculans 568.</title>
        <authorList>
            <consortium name="US DOE Joint Genome Institute"/>
            <person name="Copeland A."/>
            <person name="Lucas S."/>
            <person name="Lapidus A."/>
            <person name="Barry K."/>
            <person name="Glavina del Rio T."/>
            <person name="Dalin E."/>
            <person name="Tice H."/>
            <person name="Pitluck S."/>
            <person name="Chain P."/>
            <person name="Malfatti S."/>
            <person name="Shin M."/>
            <person name="Vergez L."/>
            <person name="Schmutz J."/>
            <person name="Larimer F."/>
            <person name="Land M."/>
            <person name="Hauser L."/>
            <person name="Kyrpides N."/>
            <person name="Kim E."/>
            <person name="Taghavi S."/>
            <person name="Newman L."/>
            <person name="Vangronsveld J."/>
            <person name="van der Lelie D."/>
            <person name="Richardson P."/>
        </authorList>
    </citation>
    <scope>NUCLEOTIDE SEQUENCE [LARGE SCALE GENOMIC DNA]</scope>
    <source>
        <strain>568</strain>
    </source>
</reference>
<dbReference type="EMBL" id="CP000826">
    <property type="protein sequence ID" value="ABV39615.1"/>
    <property type="status" value="ALT_INIT"/>
    <property type="molecule type" value="Genomic_DNA"/>
</dbReference>
<dbReference type="SMR" id="A8G925"/>
<dbReference type="STRING" id="399741.Spro_0507"/>
<dbReference type="KEGG" id="spe:Spro_0507"/>
<dbReference type="eggNOG" id="COG2827">
    <property type="taxonomic scope" value="Bacteria"/>
</dbReference>
<dbReference type="HOGENOM" id="CLU_135650_0_0_6"/>
<dbReference type="OrthoDB" id="9797095at2"/>
<dbReference type="CDD" id="cd10456">
    <property type="entry name" value="GIY-YIG_UPF0213"/>
    <property type="match status" value="1"/>
</dbReference>
<dbReference type="Gene3D" id="3.40.1440.10">
    <property type="entry name" value="GIY-YIG endonuclease"/>
    <property type="match status" value="1"/>
</dbReference>
<dbReference type="HAMAP" id="MF_01029">
    <property type="entry name" value="UPF0213"/>
    <property type="match status" value="1"/>
</dbReference>
<dbReference type="InterPro" id="IPR000305">
    <property type="entry name" value="GIY-YIG_endonuc"/>
</dbReference>
<dbReference type="InterPro" id="IPR035901">
    <property type="entry name" value="GIY-YIG_endonuc_sf"/>
</dbReference>
<dbReference type="InterPro" id="IPR050190">
    <property type="entry name" value="UPF0213_domain"/>
</dbReference>
<dbReference type="InterPro" id="IPR022992">
    <property type="entry name" value="UPF0213_GIY-YIG_endonuc"/>
</dbReference>
<dbReference type="PANTHER" id="PTHR34477">
    <property type="entry name" value="UPF0213 PROTEIN YHBQ"/>
    <property type="match status" value="1"/>
</dbReference>
<dbReference type="PANTHER" id="PTHR34477:SF1">
    <property type="entry name" value="UPF0213 PROTEIN YHBQ"/>
    <property type="match status" value="1"/>
</dbReference>
<dbReference type="Pfam" id="PF01541">
    <property type="entry name" value="GIY-YIG"/>
    <property type="match status" value="1"/>
</dbReference>
<dbReference type="SUPFAM" id="SSF82771">
    <property type="entry name" value="GIY-YIG endonuclease"/>
    <property type="match status" value="1"/>
</dbReference>
<dbReference type="PROSITE" id="PS50164">
    <property type="entry name" value="GIY_YIG"/>
    <property type="match status" value="1"/>
</dbReference>
<accession>A8G925</accession>
<evidence type="ECO:0000255" key="1">
    <source>
        <dbReference type="HAMAP-Rule" id="MF_01029"/>
    </source>
</evidence>
<evidence type="ECO:0000305" key="2"/>